<feature type="chain" id="PRO_1000002461" description="Holliday junction branch migration complex subunit RuvA">
    <location>
        <begin position="1"/>
        <end position="204"/>
    </location>
</feature>
<feature type="region of interest" description="Domain I" evidence="1">
    <location>
        <begin position="1"/>
        <end position="64"/>
    </location>
</feature>
<feature type="region of interest" description="Domain II" evidence="1">
    <location>
        <begin position="65"/>
        <end position="143"/>
    </location>
</feature>
<feature type="region of interest" description="Flexible linker" evidence="1">
    <location>
        <begin position="144"/>
        <end position="153"/>
    </location>
</feature>
<feature type="region of interest" description="Domain III" evidence="1">
    <location>
        <begin position="153"/>
        <end position="204"/>
    </location>
</feature>
<gene>
    <name evidence="1" type="primary">ruvA</name>
    <name type="ordered locus">Hhal_2212</name>
</gene>
<name>RUVA_HALHL</name>
<dbReference type="EMBL" id="CP000544">
    <property type="protein sequence ID" value="ABM62976.1"/>
    <property type="molecule type" value="Genomic_DNA"/>
</dbReference>
<dbReference type="RefSeq" id="WP_011814998.1">
    <property type="nucleotide sequence ID" value="NC_008789.1"/>
</dbReference>
<dbReference type="SMR" id="A1WZ64"/>
<dbReference type="STRING" id="349124.Hhal_2212"/>
<dbReference type="KEGG" id="hha:Hhal_2212"/>
<dbReference type="eggNOG" id="COG0632">
    <property type="taxonomic scope" value="Bacteria"/>
</dbReference>
<dbReference type="HOGENOM" id="CLU_087936_0_0_6"/>
<dbReference type="OrthoDB" id="5293449at2"/>
<dbReference type="Proteomes" id="UP000000647">
    <property type="component" value="Chromosome"/>
</dbReference>
<dbReference type="GO" id="GO:0005737">
    <property type="term" value="C:cytoplasm"/>
    <property type="evidence" value="ECO:0007669"/>
    <property type="project" value="UniProtKB-SubCell"/>
</dbReference>
<dbReference type="GO" id="GO:0009379">
    <property type="term" value="C:Holliday junction helicase complex"/>
    <property type="evidence" value="ECO:0007669"/>
    <property type="project" value="InterPro"/>
</dbReference>
<dbReference type="GO" id="GO:0048476">
    <property type="term" value="C:Holliday junction resolvase complex"/>
    <property type="evidence" value="ECO:0007669"/>
    <property type="project" value="UniProtKB-UniRule"/>
</dbReference>
<dbReference type="GO" id="GO:0005524">
    <property type="term" value="F:ATP binding"/>
    <property type="evidence" value="ECO:0007669"/>
    <property type="project" value="InterPro"/>
</dbReference>
<dbReference type="GO" id="GO:0000400">
    <property type="term" value="F:four-way junction DNA binding"/>
    <property type="evidence" value="ECO:0007669"/>
    <property type="project" value="UniProtKB-UniRule"/>
</dbReference>
<dbReference type="GO" id="GO:0009378">
    <property type="term" value="F:four-way junction helicase activity"/>
    <property type="evidence" value="ECO:0007669"/>
    <property type="project" value="InterPro"/>
</dbReference>
<dbReference type="GO" id="GO:0006310">
    <property type="term" value="P:DNA recombination"/>
    <property type="evidence" value="ECO:0007669"/>
    <property type="project" value="UniProtKB-UniRule"/>
</dbReference>
<dbReference type="GO" id="GO:0006281">
    <property type="term" value="P:DNA repair"/>
    <property type="evidence" value="ECO:0007669"/>
    <property type="project" value="UniProtKB-UniRule"/>
</dbReference>
<dbReference type="CDD" id="cd14332">
    <property type="entry name" value="UBA_RuvA_C"/>
    <property type="match status" value="1"/>
</dbReference>
<dbReference type="Gene3D" id="1.10.150.20">
    <property type="entry name" value="5' to 3' exonuclease, C-terminal subdomain"/>
    <property type="match status" value="1"/>
</dbReference>
<dbReference type="Gene3D" id="1.10.8.10">
    <property type="entry name" value="DNA helicase RuvA subunit, C-terminal domain"/>
    <property type="match status" value="1"/>
</dbReference>
<dbReference type="Gene3D" id="2.40.50.140">
    <property type="entry name" value="Nucleic acid-binding proteins"/>
    <property type="match status" value="1"/>
</dbReference>
<dbReference type="HAMAP" id="MF_00031">
    <property type="entry name" value="DNA_HJ_migration_RuvA"/>
    <property type="match status" value="1"/>
</dbReference>
<dbReference type="InterPro" id="IPR013849">
    <property type="entry name" value="DNA_helicase_Holl-junc_RuvA_I"/>
</dbReference>
<dbReference type="InterPro" id="IPR003583">
    <property type="entry name" value="Hlx-hairpin-Hlx_DNA-bd_motif"/>
</dbReference>
<dbReference type="InterPro" id="IPR012340">
    <property type="entry name" value="NA-bd_OB-fold"/>
</dbReference>
<dbReference type="InterPro" id="IPR000085">
    <property type="entry name" value="RuvA"/>
</dbReference>
<dbReference type="InterPro" id="IPR010994">
    <property type="entry name" value="RuvA_2-like"/>
</dbReference>
<dbReference type="InterPro" id="IPR011114">
    <property type="entry name" value="RuvA_C"/>
</dbReference>
<dbReference type="InterPro" id="IPR036267">
    <property type="entry name" value="RuvA_C_sf"/>
</dbReference>
<dbReference type="NCBIfam" id="TIGR00084">
    <property type="entry name" value="ruvA"/>
    <property type="match status" value="1"/>
</dbReference>
<dbReference type="Pfam" id="PF14520">
    <property type="entry name" value="HHH_5"/>
    <property type="match status" value="1"/>
</dbReference>
<dbReference type="Pfam" id="PF07499">
    <property type="entry name" value="RuvA_C"/>
    <property type="match status" value="1"/>
</dbReference>
<dbReference type="Pfam" id="PF01330">
    <property type="entry name" value="RuvA_N"/>
    <property type="match status" value="1"/>
</dbReference>
<dbReference type="SMART" id="SM00278">
    <property type="entry name" value="HhH1"/>
    <property type="match status" value="2"/>
</dbReference>
<dbReference type="SUPFAM" id="SSF46929">
    <property type="entry name" value="DNA helicase RuvA subunit, C-terminal domain"/>
    <property type="match status" value="1"/>
</dbReference>
<dbReference type="SUPFAM" id="SSF50249">
    <property type="entry name" value="Nucleic acid-binding proteins"/>
    <property type="match status" value="1"/>
</dbReference>
<dbReference type="SUPFAM" id="SSF47781">
    <property type="entry name" value="RuvA domain 2-like"/>
    <property type="match status" value="1"/>
</dbReference>
<keyword id="KW-0963">Cytoplasm</keyword>
<keyword id="KW-0227">DNA damage</keyword>
<keyword id="KW-0233">DNA recombination</keyword>
<keyword id="KW-0234">DNA repair</keyword>
<keyword id="KW-0238">DNA-binding</keyword>
<keyword id="KW-1185">Reference proteome</keyword>
<organism>
    <name type="scientific">Halorhodospira halophila (strain DSM 244 / SL1)</name>
    <name type="common">Ectothiorhodospira halophila (strain DSM 244 / SL1)</name>
    <dbReference type="NCBI Taxonomy" id="349124"/>
    <lineage>
        <taxon>Bacteria</taxon>
        <taxon>Pseudomonadati</taxon>
        <taxon>Pseudomonadota</taxon>
        <taxon>Gammaproteobacteria</taxon>
        <taxon>Chromatiales</taxon>
        <taxon>Ectothiorhodospiraceae</taxon>
        <taxon>Halorhodospira</taxon>
    </lineage>
</organism>
<protein>
    <recommendedName>
        <fullName evidence="1">Holliday junction branch migration complex subunit RuvA</fullName>
    </recommendedName>
</protein>
<evidence type="ECO:0000255" key="1">
    <source>
        <dbReference type="HAMAP-Rule" id="MF_00031"/>
    </source>
</evidence>
<proteinExistence type="inferred from homology"/>
<sequence length="204" mass="21876">MIARLRGTLLEKRPPTLVVEANGLGYEVEAPLSTIEALPETGREVILHTHLSVREDGQTLFGFRTRAERDLFRRLIRVSGVGPKLGLALLSGVDGEELVRCVRDDDPKRLTQVPGIGRKTAERLIVELRDRLDGVGGGSTAAPAAGADHPTGENDPVSEAIEGLVALGYKPPEAARMARNAAEPELGCEAIIRRALQRAVPRGG</sequence>
<accession>A1WZ64</accession>
<reference key="1">
    <citation type="submission" date="2006-12" db="EMBL/GenBank/DDBJ databases">
        <title>Complete sequence of Halorhodospira halophila SL1.</title>
        <authorList>
            <consortium name="US DOE Joint Genome Institute"/>
            <person name="Copeland A."/>
            <person name="Lucas S."/>
            <person name="Lapidus A."/>
            <person name="Barry K."/>
            <person name="Detter J.C."/>
            <person name="Glavina del Rio T."/>
            <person name="Hammon N."/>
            <person name="Israni S."/>
            <person name="Dalin E."/>
            <person name="Tice H."/>
            <person name="Pitluck S."/>
            <person name="Saunders E."/>
            <person name="Brettin T."/>
            <person name="Bruce D."/>
            <person name="Han C."/>
            <person name="Tapia R."/>
            <person name="Schmutz J."/>
            <person name="Larimer F."/>
            <person name="Land M."/>
            <person name="Hauser L."/>
            <person name="Kyrpides N."/>
            <person name="Mikhailova N."/>
            <person name="Hoff W."/>
            <person name="Richardson P."/>
        </authorList>
    </citation>
    <scope>NUCLEOTIDE SEQUENCE [LARGE SCALE GENOMIC DNA]</scope>
    <source>
        <strain>DSM 244 / SL1</strain>
    </source>
</reference>
<comment type="function">
    <text evidence="1">The RuvA-RuvB-RuvC complex processes Holliday junction (HJ) DNA during genetic recombination and DNA repair, while the RuvA-RuvB complex plays an important role in the rescue of blocked DNA replication forks via replication fork reversal (RFR). RuvA specifically binds to HJ cruciform DNA, conferring on it an open structure. The RuvB hexamer acts as an ATP-dependent pump, pulling dsDNA into and through the RuvAB complex. HJ branch migration allows RuvC to scan DNA until it finds its consensus sequence, where it cleaves and resolves the cruciform DNA.</text>
</comment>
<comment type="subunit">
    <text evidence="1">Homotetramer. Forms an RuvA(8)-RuvB(12)-Holliday junction (HJ) complex. HJ DNA is sandwiched between 2 RuvA tetramers; dsDNA enters through RuvA and exits via RuvB. An RuvB hexamer assembles on each DNA strand where it exits the tetramer. Each RuvB hexamer is contacted by two RuvA subunits (via domain III) on 2 adjacent RuvB subunits; this complex drives branch migration. In the full resolvosome a probable DNA-RuvA(4)-RuvB(12)-RuvC(2) complex forms which resolves the HJ.</text>
</comment>
<comment type="subcellular location">
    <subcellularLocation>
        <location evidence="1">Cytoplasm</location>
    </subcellularLocation>
</comment>
<comment type="domain">
    <text evidence="1">Has three domains with a flexible linker between the domains II and III and assumes an 'L' shape. Domain III is highly mobile and contacts RuvB.</text>
</comment>
<comment type="similarity">
    <text evidence="1">Belongs to the RuvA family.</text>
</comment>